<organism>
    <name type="scientific">Yersinia enterocolitica serotype O:8 / biotype 1B (strain NCTC 13174 / 8081)</name>
    <dbReference type="NCBI Taxonomy" id="393305"/>
    <lineage>
        <taxon>Bacteria</taxon>
        <taxon>Pseudomonadati</taxon>
        <taxon>Pseudomonadota</taxon>
        <taxon>Gammaproteobacteria</taxon>
        <taxon>Enterobacterales</taxon>
        <taxon>Yersiniaceae</taxon>
        <taxon>Yersinia</taxon>
    </lineage>
</organism>
<feature type="chain" id="PRO_1000017380" description="NADH-quinone oxidoreductase subunit N">
    <location>
        <begin position="1"/>
        <end position="485"/>
    </location>
</feature>
<feature type="transmembrane region" description="Helical" evidence="1">
    <location>
        <begin position="10"/>
        <end position="30"/>
    </location>
</feature>
<feature type="transmembrane region" description="Helical" evidence="1">
    <location>
        <begin position="35"/>
        <end position="55"/>
    </location>
</feature>
<feature type="transmembrane region" description="Helical" evidence="1">
    <location>
        <begin position="75"/>
        <end position="95"/>
    </location>
</feature>
<feature type="transmembrane region" description="Helical" evidence="1">
    <location>
        <begin position="104"/>
        <end position="124"/>
    </location>
</feature>
<feature type="transmembrane region" description="Helical" evidence="1">
    <location>
        <begin position="125"/>
        <end position="145"/>
    </location>
</feature>
<feature type="transmembrane region" description="Helical" evidence="1">
    <location>
        <begin position="159"/>
        <end position="179"/>
    </location>
</feature>
<feature type="transmembrane region" description="Helical" evidence="1">
    <location>
        <begin position="203"/>
        <end position="223"/>
    </location>
</feature>
<feature type="transmembrane region" description="Helical" evidence="1">
    <location>
        <begin position="235"/>
        <end position="255"/>
    </location>
</feature>
<feature type="transmembrane region" description="Helical" evidence="1">
    <location>
        <begin position="271"/>
        <end position="291"/>
    </location>
</feature>
<feature type="transmembrane region" description="Helical" evidence="1">
    <location>
        <begin position="297"/>
        <end position="317"/>
    </location>
</feature>
<feature type="transmembrane region" description="Helical" evidence="1">
    <location>
        <begin position="327"/>
        <end position="347"/>
    </location>
</feature>
<feature type="transmembrane region" description="Helical" evidence="1">
    <location>
        <begin position="374"/>
        <end position="394"/>
    </location>
</feature>
<feature type="transmembrane region" description="Helical" evidence="1">
    <location>
        <begin position="408"/>
        <end position="427"/>
    </location>
</feature>
<feature type="transmembrane region" description="Helical" evidence="1">
    <location>
        <begin position="449"/>
        <end position="469"/>
    </location>
</feature>
<dbReference type="EC" id="7.1.1.-" evidence="1"/>
<dbReference type="EMBL" id="AM286415">
    <property type="protein sequence ID" value="CAL11447.1"/>
    <property type="molecule type" value="Genomic_DNA"/>
</dbReference>
<dbReference type="RefSeq" id="WP_011815945.1">
    <property type="nucleotide sequence ID" value="NC_008800.1"/>
</dbReference>
<dbReference type="RefSeq" id="YP_001005672.1">
    <property type="nucleotide sequence ID" value="NC_008800.1"/>
</dbReference>
<dbReference type="SMR" id="A1JLL1"/>
<dbReference type="KEGG" id="yen:YE1356"/>
<dbReference type="PATRIC" id="fig|393305.7.peg.1475"/>
<dbReference type="eggNOG" id="COG1007">
    <property type="taxonomic scope" value="Bacteria"/>
</dbReference>
<dbReference type="HOGENOM" id="CLU_007100_1_5_6"/>
<dbReference type="OrthoDB" id="9768329at2"/>
<dbReference type="Proteomes" id="UP000000642">
    <property type="component" value="Chromosome"/>
</dbReference>
<dbReference type="GO" id="GO:0005886">
    <property type="term" value="C:plasma membrane"/>
    <property type="evidence" value="ECO:0007669"/>
    <property type="project" value="UniProtKB-SubCell"/>
</dbReference>
<dbReference type="GO" id="GO:0008137">
    <property type="term" value="F:NADH dehydrogenase (ubiquinone) activity"/>
    <property type="evidence" value="ECO:0007669"/>
    <property type="project" value="InterPro"/>
</dbReference>
<dbReference type="GO" id="GO:0050136">
    <property type="term" value="F:NADH:ubiquinone reductase (non-electrogenic) activity"/>
    <property type="evidence" value="ECO:0007669"/>
    <property type="project" value="UniProtKB-UniRule"/>
</dbReference>
<dbReference type="GO" id="GO:0048038">
    <property type="term" value="F:quinone binding"/>
    <property type="evidence" value="ECO:0007669"/>
    <property type="project" value="UniProtKB-KW"/>
</dbReference>
<dbReference type="GO" id="GO:0042773">
    <property type="term" value="P:ATP synthesis coupled electron transport"/>
    <property type="evidence" value="ECO:0007669"/>
    <property type="project" value="InterPro"/>
</dbReference>
<dbReference type="HAMAP" id="MF_00445">
    <property type="entry name" value="NDH1_NuoN_1"/>
    <property type="match status" value="1"/>
</dbReference>
<dbReference type="InterPro" id="IPR010096">
    <property type="entry name" value="NADH-Q_OxRdtase_suN/2"/>
</dbReference>
<dbReference type="InterPro" id="IPR001750">
    <property type="entry name" value="ND/Mrp_TM"/>
</dbReference>
<dbReference type="NCBIfam" id="TIGR01770">
    <property type="entry name" value="NDH_I_N"/>
    <property type="match status" value="1"/>
</dbReference>
<dbReference type="NCBIfam" id="NF004439">
    <property type="entry name" value="PRK05777.1-1"/>
    <property type="match status" value="1"/>
</dbReference>
<dbReference type="PANTHER" id="PTHR22773">
    <property type="entry name" value="NADH DEHYDROGENASE"/>
    <property type="match status" value="1"/>
</dbReference>
<dbReference type="Pfam" id="PF00361">
    <property type="entry name" value="Proton_antipo_M"/>
    <property type="match status" value="1"/>
</dbReference>
<reference key="1">
    <citation type="journal article" date="2006" name="PLoS Genet.">
        <title>The complete genome sequence and comparative genome analysis of the high pathogenicity Yersinia enterocolitica strain 8081.</title>
        <authorList>
            <person name="Thomson N.R."/>
            <person name="Howard S."/>
            <person name="Wren B.W."/>
            <person name="Holden M.T.G."/>
            <person name="Crossman L."/>
            <person name="Challis G.L."/>
            <person name="Churcher C."/>
            <person name="Mungall K."/>
            <person name="Brooks K."/>
            <person name="Chillingworth T."/>
            <person name="Feltwell T."/>
            <person name="Abdellah Z."/>
            <person name="Hauser H."/>
            <person name="Jagels K."/>
            <person name="Maddison M."/>
            <person name="Moule S."/>
            <person name="Sanders M."/>
            <person name="Whitehead S."/>
            <person name="Quail M.A."/>
            <person name="Dougan G."/>
            <person name="Parkhill J."/>
            <person name="Prentice M.B."/>
        </authorList>
    </citation>
    <scope>NUCLEOTIDE SEQUENCE [LARGE SCALE GENOMIC DNA]</scope>
    <source>
        <strain>NCTC 13174 / 8081</strain>
    </source>
</reference>
<proteinExistence type="inferred from homology"/>
<sequence>MTITPQQLQAMLPLLIVGLTVVVVMLSIAWRRDHFINATLTVIGLNLALLSLYFVGQVGPLDVTPLMRVDGYAMFYIGLVIVASLATSTFAYPWLNGYPDNREEFYLLVLIATMGGILLASANHLASLFLGIELISLPLFGLIGYAYRQKRSLEASIKYMLLSAAASSFLLFGMALLYAESGSLSFAGLGKSLSDSMIHQPLILAGLGMMIVGLGFKLSLVPFQLWTPDVYQGAPAPVSTFLATASKIAIFAVVMRLFLYAPAADSEAVRLVLSLIAVASILFGNLMAISQTNIKRLLGYSSIAHLGYLLIALVAVQTHQLALETAGVYLAGYLFSSLGAFGVVSLMSSPYKGPDAESLFSYRGLFWHKPILSAVMTVMMLSLAGIPMTLGFIGKFFVVAMGVSANLWWLTGAVVLGSAIGLYYYLRVTVSLYLSAPETLVRDTPSNWALTAGGVVVLISAILVLVLGIYPQPLISLVQLAQPLM</sequence>
<accession>A1JLL1</accession>
<gene>
    <name evidence="1" type="primary">nuoN</name>
    <name type="ordered locus">YE1356</name>
</gene>
<comment type="function">
    <text evidence="1">NDH-1 shuttles electrons from NADH, via FMN and iron-sulfur (Fe-S) centers, to quinones in the respiratory chain. The immediate electron acceptor for the enzyme in this species is believed to be ubiquinone. Couples the redox reaction to proton translocation (for every two electrons transferred, four hydrogen ions are translocated across the cytoplasmic membrane), and thus conserves the redox energy in a proton gradient.</text>
</comment>
<comment type="catalytic activity">
    <reaction evidence="1">
        <text>a quinone + NADH + 5 H(+)(in) = a quinol + NAD(+) + 4 H(+)(out)</text>
        <dbReference type="Rhea" id="RHEA:57888"/>
        <dbReference type="ChEBI" id="CHEBI:15378"/>
        <dbReference type="ChEBI" id="CHEBI:24646"/>
        <dbReference type="ChEBI" id="CHEBI:57540"/>
        <dbReference type="ChEBI" id="CHEBI:57945"/>
        <dbReference type="ChEBI" id="CHEBI:132124"/>
    </reaction>
</comment>
<comment type="subunit">
    <text evidence="1">NDH-1 is composed of 13 different subunits. Subunits NuoA, H, J, K, L, M, N constitute the membrane sector of the complex.</text>
</comment>
<comment type="subcellular location">
    <subcellularLocation>
        <location evidence="1">Cell inner membrane</location>
        <topology evidence="1">Multi-pass membrane protein</topology>
    </subcellularLocation>
</comment>
<comment type="similarity">
    <text evidence="1">Belongs to the complex I subunit 2 family.</text>
</comment>
<evidence type="ECO:0000255" key="1">
    <source>
        <dbReference type="HAMAP-Rule" id="MF_00445"/>
    </source>
</evidence>
<name>NUON_YERE8</name>
<protein>
    <recommendedName>
        <fullName evidence="1">NADH-quinone oxidoreductase subunit N</fullName>
        <ecNumber evidence="1">7.1.1.-</ecNumber>
    </recommendedName>
    <alternativeName>
        <fullName evidence="1">NADH dehydrogenase I subunit N</fullName>
    </alternativeName>
    <alternativeName>
        <fullName evidence="1">NDH-1 subunit N</fullName>
    </alternativeName>
</protein>
<keyword id="KW-0997">Cell inner membrane</keyword>
<keyword id="KW-1003">Cell membrane</keyword>
<keyword id="KW-0472">Membrane</keyword>
<keyword id="KW-0520">NAD</keyword>
<keyword id="KW-0874">Quinone</keyword>
<keyword id="KW-1278">Translocase</keyword>
<keyword id="KW-0812">Transmembrane</keyword>
<keyword id="KW-1133">Transmembrane helix</keyword>
<keyword id="KW-0813">Transport</keyword>
<keyword id="KW-0830">Ubiquinone</keyword>